<gene>
    <name evidence="1" type="primary">mdh</name>
    <name type="ordered locus">M446_2161</name>
</gene>
<dbReference type="EC" id="1.1.1.37" evidence="1"/>
<dbReference type="EMBL" id="CP000943">
    <property type="protein sequence ID" value="ACA16623.1"/>
    <property type="molecule type" value="Genomic_DNA"/>
</dbReference>
<dbReference type="RefSeq" id="WP_012332032.1">
    <property type="nucleotide sequence ID" value="NC_010511.1"/>
</dbReference>
<dbReference type="SMR" id="B0UCF0"/>
<dbReference type="STRING" id="426117.M446_2161"/>
<dbReference type="KEGG" id="met:M446_2161"/>
<dbReference type="eggNOG" id="COG0039">
    <property type="taxonomic scope" value="Bacteria"/>
</dbReference>
<dbReference type="HOGENOM" id="CLU_045401_2_1_5"/>
<dbReference type="GO" id="GO:0004459">
    <property type="term" value="F:L-lactate dehydrogenase activity"/>
    <property type="evidence" value="ECO:0007669"/>
    <property type="project" value="TreeGrafter"/>
</dbReference>
<dbReference type="GO" id="GO:0030060">
    <property type="term" value="F:L-malate dehydrogenase (NAD+) activity"/>
    <property type="evidence" value="ECO:0007669"/>
    <property type="project" value="UniProtKB-UniRule"/>
</dbReference>
<dbReference type="GO" id="GO:0006089">
    <property type="term" value="P:lactate metabolic process"/>
    <property type="evidence" value="ECO:0007669"/>
    <property type="project" value="TreeGrafter"/>
</dbReference>
<dbReference type="GO" id="GO:0006099">
    <property type="term" value="P:tricarboxylic acid cycle"/>
    <property type="evidence" value="ECO:0007669"/>
    <property type="project" value="UniProtKB-UniRule"/>
</dbReference>
<dbReference type="CDD" id="cd01339">
    <property type="entry name" value="LDH-like_MDH"/>
    <property type="match status" value="1"/>
</dbReference>
<dbReference type="FunFam" id="3.40.50.720:FF:000018">
    <property type="entry name" value="Malate dehydrogenase"/>
    <property type="match status" value="1"/>
</dbReference>
<dbReference type="FunFam" id="3.90.110.10:FF:000004">
    <property type="entry name" value="Malate dehydrogenase"/>
    <property type="match status" value="1"/>
</dbReference>
<dbReference type="Gene3D" id="3.90.110.10">
    <property type="entry name" value="Lactate dehydrogenase/glycoside hydrolase, family 4, C-terminal"/>
    <property type="match status" value="1"/>
</dbReference>
<dbReference type="Gene3D" id="3.40.50.720">
    <property type="entry name" value="NAD(P)-binding Rossmann-like Domain"/>
    <property type="match status" value="1"/>
</dbReference>
<dbReference type="HAMAP" id="MF_00487">
    <property type="entry name" value="Malate_dehydrog_3"/>
    <property type="match status" value="1"/>
</dbReference>
<dbReference type="InterPro" id="IPR001557">
    <property type="entry name" value="L-lactate/malate_DH"/>
</dbReference>
<dbReference type="InterPro" id="IPR022383">
    <property type="entry name" value="Lactate/malate_DH_C"/>
</dbReference>
<dbReference type="InterPro" id="IPR001236">
    <property type="entry name" value="Lactate/malate_DH_N"/>
</dbReference>
<dbReference type="InterPro" id="IPR015955">
    <property type="entry name" value="Lactate_DH/Glyco_Ohase_4_C"/>
</dbReference>
<dbReference type="InterPro" id="IPR011275">
    <property type="entry name" value="Malate_DH_type3"/>
</dbReference>
<dbReference type="InterPro" id="IPR036291">
    <property type="entry name" value="NAD(P)-bd_dom_sf"/>
</dbReference>
<dbReference type="NCBIfam" id="TIGR01763">
    <property type="entry name" value="MalateDH_bact"/>
    <property type="match status" value="1"/>
</dbReference>
<dbReference type="NCBIfam" id="NF004863">
    <property type="entry name" value="PRK06223.1"/>
    <property type="match status" value="1"/>
</dbReference>
<dbReference type="PANTHER" id="PTHR43128">
    <property type="entry name" value="L-2-HYDROXYCARBOXYLATE DEHYDROGENASE (NAD(P)(+))"/>
    <property type="match status" value="1"/>
</dbReference>
<dbReference type="PANTHER" id="PTHR43128:SF16">
    <property type="entry name" value="L-LACTATE DEHYDROGENASE"/>
    <property type="match status" value="1"/>
</dbReference>
<dbReference type="Pfam" id="PF02866">
    <property type="entry name" value="Ldh_1_C"/>
    <property type="match status" value="1"/>
</dbReference>
<dbReference type="Pfam" id="PF00056">
    <property type="entry name" value="Ldh_1_N"/>
    <property type="match status" value="1"/>
</dbReference>
<dbReference type="PIRSF" id="PIRSF000102">
    <property type="entry name" value="Lac_mal_DH"/>
    <property type="match status" value="1"/>
</dbReference>
<dbReference type="PRINTS" id="PR00086">
    <property type="entry name" value="LLDHDRGNASE"/>
</dbReference>
<dbReference type="SUPFAM" id="SSF56327">
    <property type="entry name" value="LDH C-terminal domain-like"/>
    <property type="match status" value="1"/>
</dbReference>
<dbReference type="SUPFAM" id="SSF51735">
    <property type="entry name" value="NAD(P)-binding Rossmann-fold domains"/>
    <property type="match status" value="1"/>
</dbReference>
<accession>B0UCF0</accession>
<keyword id="KW-0520">NAD</keyword>
<keyword id="KW-0560">Oxidoreductase</keyword>
<keyword id="KW-0816">Tricarboxylic acid cycle</keyword>
<feature type="chain" id="PRO_1000126141" description="Malate dehydrogenase">
    <location>
        <begin position="1"/>
        <end position="320"/>
    </location>
</feature>
<feature type="active site" description="Proton acceptor" evidence="1">
    <location>
        <position position="176"/>
    </location>
</feature>
<feature type="binding site" evidence="1">
    <location>
        <begin position="10"/>
        <end position="15"/>
    </location>
    <ligand>
        <name>NAD(+)</name>
        <dbReference type="ChEBI" id="CHEBI:57540"/>
    </ligand>
</feature>
<feature type="binding site" evidence="1">
    <location>
        <position position="34"/>
    </location>
    <ligand>
        <name>NAD(+)</name>
        <dbReference type="ChEBI" id="CHEBI:57540"/>
    </ligand>
</feature>
<feature type="binding site" evidence="1">
    <location>
        <position position="83"/>
    </location>
    <ligand>
        <name>substrate</name>
    </ligand>
</feature>
<feature type="binding site" evidence="1">
    <location>
        <position position="89"/>
    </location>
    <ligand>
        <name>substrate</name>
    </ligand>
</feature>
<feature type="binding site" evidence="1">
    <location>
        <position position="96"/>
    </location>
    <ligand>
        <name>NAD(+)</name>
        <dbReference type="ChEBI" id="CHEBI:57540"/>
    </ligand>
</feature>
<feature type="binding site" evidence="1">
    <location>
        <begin position="119"/>
        <end position="121"/>
    </location>
    <ligand>
        <name>NAD(+)</name>
        <dbReference type="ChEBI" id="CHEBI:57540"/>
    </ligand>
</feature>
<feature type="binding site" evidence="1">
    <location>
        <position position="121"/>
    </location>
    <ligand>
        <name>substrate</name>
    </ligand>
</feature>
<feature type="binding site" evidence="1">
    <location>
        <position position="152"/>
    </location>
    <ligand>
        <name>substrate</name>
    </ligand>
</feature>
<sequence>MARKKIALIGAGQIGGTLAHLAGLKELGDVVLFDIADGVPQGKGLDIAESAPVDGFDAKYAGASDYAAIAGADVVIVTAGVPRKPGMSRDDLIGINLQVMEKVGAGIRTHAPNAFVICITNPLDAMVWALQKFSGLAPNKIVGMAGVLDSARFRHFLAEEFQVSVEDVTAFVLGGHGDDMVPLVRYSTVAGVPLPDLVKMGWTTQEKLDAMVERTRKGGGEIVNLLKTGSAFYAPAASAIAMAESYLKDKRRVLPCAAYLTGQYGIDGLFIGVPIVIGENGVERVVEVEFSAEEKAMFDKSVASVKGLVEACKGINAALA</sequence>
<organism>
    <name type="scientific">Methylobacterium sp. (strain 4-46)</name>
    <dbReference type="NCBI Taxonomy" id="426117"/>
    <lineage>
        <taxon>Bacteria</taxon>
        <taxon>Pseudomonadati</taxon>
        <taxon>Pseudomonadota</taxon>
        <taxon>Alphaproteobacteria</taxon>
        <taxon>Hyphomicrobiales</taxon>
        <taxon>Methylobacteriaceae</taxon>
        <taxon>Methylobacterium</taxon>
    </lineage>
</organism>
<reference key="1">
    <citation type="submission" date="2008-02" db="EMBL/GenBank/DDBJ databases">
        <title>Complete sequence of chromosome of Methylobacterium sp. 4-46.</title>
        <authorList>
            <consortium name="US DOE Joint Genome Institute"/>
            <person name="Copeland A."/>
            <person name="Lucas S."/>
            <person name="Lapidus A."/>
            <person name="Glavina del Rio T."/>
            <person name="Dalin E."/>
            <person name="Tice H."/>
            <person name="Bruce D."/>
            <person name="Goodwin L."/>
            <person name="Pitluck S."/>
            <person name="Chertkov O."/>
            <person name="Brettin T."/>
            <person name="Detter J.C."/>
            <person name="Han C."/>
            <person name="Kuske C.R."/>
            <person name="Schmutz J."/>
            <person name="Larimer F."/>
            <person name="Land M."/>
            <person name="Hauser L."/>
            <person name="Kyrpides N."/>
            <person name="Ivanova N."/>
            <person name="Marx C.J."/>
            <person name="Richardson P."/>
        </authorList>
    </citation>
    <scope>NUCLEOTIDE SEQUENCE [LARGE SCALE GENOMIC DNA]</scope>
    <source>
        <strain>4-46</strain>
    </source>
</reference>
<comment type="function">
    <text evidence="1">Catalyzes the reversible oxidation of malate to oxaloacetate.</text>
</comment>
<comment type="catalytic activity">
    <reaction evidence="1">
        <text>(S)-malate + NAD(+) = oxaloacetate + NADH + H(+)</text>
        <dbReference type="Rhea" id="RHEA:21432"/>
        <dbReference type="ChEBI" id="CHEBI:15378"/>
        <dbReference type="ChEBI" id="CHEBI:15589"/>
        <dbReference type="ChEBI" id="CHEBI:16452"/>
        <dbReference type="ChEBI" id="CHEBI:57540"/>
        <dbReference type="ChEBI" id="CHEBI:57945"/>
        <dbReference type="EC" id="1.1.1.37"/>
    </reaction>
</comment>
<comment type="similarity">
    <text evidence="1">Belongs to the LDH/MDH superfamily. MDH type 3 family.</text>
</comment>
<name>MDH_METS4</name>
<proteinExistence type="inferred from homology"/>
<protein>
    <recommendedName>
        <fullName evidence="1">Malate dehydrogenase</fullName>
        <ecNumber evidence="1">1.1.1.37</ecNumber>
    </recommendedName>
</protein>
<evidence type="ECO:0000255" key="1">
    <source>
        <dbReference type="HAMAP-Rule" id="MF_00487"/>
    </source>
</evidence>